<proteinExistence type="inferred from homology"/>
<name>YOHO_ECO24</name>
<dbReference type="EMBL" id="CP000800">
    <property type="protein sequence ID" value="ABV17780.1"/>
    <property type="molecule type" value="Genomic_DNA"/>
</dbReference>
<dbReference type="RefSeq" id="WP_001216963.1">
    <property type="nucleotide sequence ID" value="NC_009801.1"/>
</dbReference>
<dbReference type="KEGG" id="ecw:EcE24377A_2417"/>
<dbReference type="HOGENOM" id="CLU_220259_0_0_6"/>
<dbReference type="Proteomes" id="UP000001122">
    <property type="component" value="Chromosome"/>
</dbReference>
<dbReference type="GO" id="GO:0005886">
    <property type="term" value="C:plasma membrane"/>
    <property type="evidence" value="ECO:0007669"/>
    <property type="project" value="UniProtKB-SubCell"/>
</dbReference>
<dbReference type="HAMAP" id="MF_01362">
    <property type="entry name" value="UPF0387"/>
    <property type="match status" value="1"/>
</dbReference>
<dbReference type="InterPro" id="IPR020870">
    <property type="entry name" value="UPF0387_membrane"/>
</dbReference>
<dbReference type="NCBIfam" id="NF010225">
    <property type="entry name" value="PRK13681.1"/>
    <property type="match status" value="1"/>
</dbReference>
<feature type="chain" id="PRO_1000067787" description="UPF0387 membrane protein YohO">
    <location>
        <begin position="1"/>
        <end position="35"/>
    </location>
</feature>
<feature type="transmembrane region" description="Helical" evidence="1">
    <location>
        <begin position="6"/>
        <end position="26"/>
    </location>
</feature>
<protein>
    <recommendedName>
        <fullName evidence="1">UPF0387 membrane protein YohO</fullName>
    </recommendedName>
</protein>
<keyword id="KW-0997">Cell inner membrane</keyword>
<keyword id="KW-1003">Cell membrane</keyword>
<keyword id="KW-0472">Membrane</keyword>
<keyword id="KW-1185">Reference proteome</keyword>
<keyword id="KW-0812">Transmembrane</keyword>
<keyword id="KW-1133">Transmembrane helix</keyword>
<evidence type="ECO:0000255" key="1">
    <source>
        <dbReference type="HAMAP-Rule" id="MF_01362"/>
    </source>
</evidence>
<gene>
    <name evidence="1" type="primary">yohO</name>
    <name type="ordered locus">EcE24377A_2417</name>
</gene>
<accession>A7ZNU4</accession>
<comment type="subcellular location">
    <subcellularLocation>
        <location evidence="1">Cell inner membrane</location>
        <topology evidence="1">Single-pass membrane protein</topology>
    </subcellularLocation>
</comment>
<comment type="similarity">
    <text evidence="1">Belongs to the UPF0387 family.</text>
</comment>
<organism>
    <name type="scientific">Escherichia coli O139:H28 (strain E24377A / ETEC)</name>
    <dbReference type="NCBI Taxonomy" id="331111"/>
    <lineage>
        <taxon>Bacteria</taxon>
        <taxon>Pseudomonadati</taxon>
        <taxon>Pseudomonadota</taxon>
        <taxon>Gammaproteobacteria</taxon>
        <taxon>Enterobacterales</taxon>
        <taxon>Enterobacteriaceae</taxon>
        <taxon>Escherichia</taxon>
    </lineage>
</organism>
<sequence>MRIAKIGVIALFLFMALGGIGGVMLAGYTFILRAG</sequence>
<reference key="1">
    <citation type="journal article" date="2008" name="J. Bacteriol.">
        <title>The pangenome structure of Escherichia coli: comparative genomic analysis of E. coli commensal and pathogenic isolates.</title>
        <authorList>
            <person name="Rasko D.A."/>
            <person name="Rosovitz M.J."/>
            <person name="Myers G.S.A."/>
            <person name="Mongodin E.F."/>
            <person name="Fricke W.F."/>
            <person name="Gajer P."/>
            <person name="Crabtree J."/>
            <person name="Sebaihia M."/>
            <person name="Thomson N.R."/>
            <person name="Chaudhuri R."/>
            <person name="Henderson I.R."/>
            <person name="Sperandio V."/>
            <person name="Ravel J."/>
        </authorList>
    </citation>
    <scope>NUCLEOTIDE SEQUENCE [LARGE SCALE GENOMIC DNA]</scope>
    <source>
        <strain>E24377A / ETEC</strain>
    </source>
</reference>